<keyword id="KW-0067">ATP-binding</keyword>
<keyword id="KW-0963">Cytoplasm</keyword>
<keyword id="KW-0227">DNA damage</keyword>
<keyword id="KW-0228">DNA excision</keyword>
<keyword id="KW-0234">DNA repair</keyword>
<keyword id="KW-0267">Excision nuclease</keyword>
<keyword id="KW-0347">Helicase</keyword>
<keyword id="KW-0378">Hydrolase</keyword>
<keyword id="KW-0547">Nucleotide-binding</keyword>
<keyword id="KW-1185">Reference proteome</keyword>
<keyword id="KW-0742">SOS response</keyword>
<reference key="1">
    <citation type="journal article" date="2013" name="Stand. Genomic Sci.">
        <title>Complete genome sequence of Arthrobacter sp. strain FB24.</title>
        <authorList>
            <person name="Nakatsu C.H."/>
            <person name="Barabote R."/>
            <person name="Thompson S."/>
            <person name="Bruce D."/>
            <person name="Detter C."/>
            <person name="Brettin T."/>
            <person name="Han C."/>
            <person name="Beasley F."/>
            <person name="Chen W."/>
            <person name="Konopka A."/>
            <person name="Xie G."/>
        </authorList>
    </citation>
    <scope>NUCLEOTIDE SEQUENCE [LARGE SCALE GENOMIC DNA]</scope>
    <source>
        <strain>FB24</strain>
    </source>
</reference>
<protein>
    <recommendedName>
        <fullName evidence="1">UvrABC system protein B</fullName>
        <shortName evidence="1">Protein UvrB</shortName>
    </recommendedName>
    <alternativeName>
        <fullName evidence="1">Excinuclease ABC subunit B</fullName>
    </alternativeName>
</protein>
<organism>
    <name type="scientific">Arthrobacter sp. (strain FB24)</name>
    <dbReference type="NCBI Taxonomy" id="290399"/>
    <lineage>
        <taxon>Bacteria</taxon>
        <taxon>Bacillati</taxon>
        <taxon>Actinomycetota</taxon>
        <taxon>Actinomycetes</taxon>
        <taxon>Micrococcales</taxon>
        <taxon>Micrococcaceae</taxon>
        <taxon>Arthrobacter</taxon>
    </lineage>
</organism>
<dbReference type="EMBL" id="CP000454">
    <property type="protein sequence ID" value="ABK03450.1"/>
    <property type="molecule type" value="Genomic_DNA"/>
</dbReference>
<dbReference type="RefSeq" id="WP_011691916.1">
    <property type="nucleotide sequence ID" value="NC_008541.1"/>
</dbReference>
<dbReference type="SMR" id="A0JWN0"/>
<dbReference type="STRING" id="290399.Arth_2070"/>
<dbReference type="KEGG" id="art:Arth_2070"/>
<dbReference type="eggNOG" id="COG0556">
    <property type="taxonomic scope" value="Bacteria"/>
</dbReference>
<dbReference type="HOGENOM" id="CLU_009621_2_1_11"/>
<dbReference type="OrthoDB" id="9806651at2"/>
<dbReference type="Proteomes" id="UP000000754">
    <property type="component" value="Chromosome"/>
</dbReference>
<dbReference type="GO" id="GO:0005737">
    <property type="term" value="C:cytoplasm"/>
    <property type="evidence" value="ECO:0007669"/>
    <property type="project" value="UniProtKB-SubCell"/>
</dbReference>
<dbReference type="GO" id="GO:0009380">
    <property type="term" value="C:excinuclease repair complex"/>
    <property type="evidence" value="ECO:0007669"/>
    <property type="project" value="InterPro"/>
</dbReference>
<dbReference type="GO" id="GO:0005524">
    <property type="term" value="F:ATP binding"/>
    <property type="evidence" value="ECO:0007669"/>
    <property type="project" value="UniProtKB-UniRule"/>
</dbReference>
<dbReference type="GO" id="GO:0016887">
    <property type="term" value="F:ATP hydrolysis activity"/>
    <property type="evidence" value="ECO:0007669"/>
    <property type="project" value="InterPro"/>
</dbReference>
<dbReference type="GO" id="GO:0003677">
    <property type="term" value="F:DNA binding"/>
    <property type="evidence" value="ECO:0007669"/>
    <property type="project" value="UniProtKB-UniRule"/>
</dbReference>
<dbReference type="GO" id="GO:0009381">
    <property type="term" value="F:excinuclease ABC activity"/>
    <property type="evidence" value="ECO:0007669"/>
    <property type="project" value="UniProtKB-UniRule"/>
</dbReference>
<dbReference type="GO" id="GO:0004386">
    <property type="term" value="F:helicase activity"/>
    <property type="evidence" value="ECO:0007669"/>
    <property type="project" value="UniProtKB-KW"/>
</dbReference>
<dbReference type="GO" id="GO:0006289">
    <property type="term" value="P:nucleotide-excision repair"/>
    <property type="evidence" value="ECO:0007669"/>
    <property type="project" value="UniProtKB-UniRule"/>
</dbReference>
<dbReference type="GO" id="GO:0009432">
    <property type="term" value="P:SOS response"/>
    <property type="evidence" value="ECO:0007669"/>
    <property type="project" value="UniProtKB-UniRule"/>
</dbReference>
<dbReference type="CDD" id="cd17916">
    <property type="entry name" value="DEXHc_UvrB"/>
    <property type="match status" value="1"/>
</dbReference>
<dbReference type="CDD" id="cd06225">
    <property type="entry name" value="HAMP"/>
    <property type="match status" value="1"/>
</dbReference>
<dbReference type="CDD" id="cd18790">
    <property type="entry name" value="SF2_C_UvrB"/>
    <property type="match status" value="1"/>
</dbReference>
<dbReference type="Gene3D" id="3.40.50.300">
    <property type="entry name" value="P-loop containing nucleotide triphosphate hydrolases"/>
    <property type="match status" value="3"/>
</dbReference>
<dbReference type="Gene3D" id="4.10.860.10">
    <property type="entry name" value="UVR domain"/>
    <property type="match status" value="1"/>
</dbReference>
<dbReference type="HAMAP" id="MF_00204">
    <property type="entry name" value="UvrB"/>
    <property type="match status" value="1"/>
</dbReference>
<dbReference type="InterPro" id="IPR006935">
    <property type="entry name" value="Helicase/UvrB_N"/>
</dbReference>
<dbReference type="InterPro" id="IPR014001">
    <property type="entry name" value="Helicase_ATP-bd"/>
</dbReference>
<dbReference type="InterPro" id="IPR001650">
    <property type="entry name" value="Helicase_C-like"/>
</dbReference>
<dbReference type="InterPro" id="IPR027417">
    <property type="entry name" value="P-loop_NTPase"/>
</dbReference>
<dbReference type="InterPro" id="IPR001943">
    <property type="entry name" value="UVR_dom"/>
</dbReference>
<dbReference type="InterPro" id="IPR036876">
    <property type="entry name" value="UVR_dom_sf"/>
</dbReference>
<dbReference type="InterPro" id="IPR004807">
    <property type="entry name" value="UvrB"/>
</dbReference>
<dbReference type="InterPro" id="IPR041471">
    <property type="entry name" value="UvrB_inter"/>
</dbReference>
<dbReference type="InterPro" id="IPR024759">
    <property type="entry name" value="UvrB_YAD/RRR_dom"/>
</dbReference>
<dbReference type="NCBIfam" id="NF003673">
    <property type="entry name" value="PRK05298.1"/>
    <property type="match status" value="1"/>
</dbReference>
<dbReference type="NCBIfam" id="TIGR00631">
    <property type="entry name" value="uvrb"/>
    <property type="match status" value="1"/>
</dbReference>
<dbReference type="PANTHER" id="PTHR24029">
    <property type="entry name" value="UVRABC SYSTEM PROTEIN B"/>
    <property type="match status" value="1"/>
</dbReference>
<dbReference type="PANTHER" id="PTHR24029:SF0">
    <property type="entry name" value="UVRABC SYSTEM PROTEIN B"/>
    <property type="match status" value="1"/>
</dbReference>
<dbReference type="Pfam" id="PF00271">
    <property type="entry name" value="Helicase_C"/>
    <property type="match status" value="1"/>
</dbReference>
<dbReference type="Pfam" id="PF04851">
    <property type="entry name" value="ResIII"/>
    <property type="match status" value="1"/>
</dbReference>
<dbReference type="Pfam" id="PF02151">
    <property type="entry name" value="UVR"/>
    <property type="match status" value="1"/>
</dbReference>
<dbReference type="Pfam" id="PF12344">
    <property type="entry name" value="UvrB"/>
    <property type="match status" value="1"/>
</dbReference>
<dbReference type="Pfam" id="PF17757">
    <property type="entry name" value="UvrB_inter"/>
    <property type="match status" value="1"/>
</dbReference>
<dbReference type="SMART" id="SM00487">
    <property type="entry name" value="DEXDc"/>
    <property type="match status" value="1"/>
</dbReference>
<dbReference type="SMART" id="SM00490">
    <property type="entry name" value="HELICc"/>
    <property type="match status" value="1"/>
</dbReference>
<dbReference type="SUPFAM" id="SSF46600">
    <property type="entry name" value="C-terminal UvrC-binding domain of UvrB"/>
    <property type="match status" value="1"/>
</dbReference>
<dbReference type="SUPFAM" id="SSF52540">
    <property type="entry name" value="P-loop containing nucleoside triphosphate hydrolases"/>
    <property type="match status" value="2"/>
</dbReference>
<dbReference type="PROSITE" id="PS51192">
    <property type="entry name" value="HELICASE_ATP_BIND_1"/>
    <property type="match status" value="1"/>
</dbReference>
<dbReference type="PROSITE" id="PS51194">
    <property type="entry name" value="HELICASE_CTER"/>
    <property type="match status" value="1"/>
</dbReference>
<dbReference type="PROSITE" id="PS50151">
    <property type="entry name" value="UVR"/>
    <property type="match status" value="1"/>
</dbReference>
<proteinExistence type="inferred from homology"/>
<accession>A0JWN0</accession>
<gene>
    <name evidence="1" type="primary">uvrB</name>
    <name type="ordered locus">Arth_2070</name>
</gene>
<name>UVRB_ARTS2</name>
<evidence type="ECO:0000255" key="1">
    <source>
        <dbReference type="HAMAP-Rule" id="MF_00204"/>
    </source>
</evidence>
<comment type="function">
    <text evidence="1">The UvrABC repair system catalyzes the recognition and processing of DNA lesions. A damage recognition complex composed of 2 UvrA and 2 UvrB subunits scans DNA for abnormalities. Upon binding of the UvrA(2)B(2) complex to a putative damaged site, the DNA wraps around one UvrB monomer. DNA wrap is dependent on ATP binding by UvrB and probably causes local melting of the DNA helix, facilitating insertion of UvrB beta-hairpin between the DNA strands. Then UvrB probes one DNA strand for the presence of a lesion. If a lesion is found the UvrA subunits dissociate and the UvrB-DNA preincision complex is formed. This complex is subsequently bound by UvrC and the second UvrB is released. If no lesion is found, the DNA wraps around the other UvrB subunit that will check the other stand for damage.</text>
</comment>
<comment type="subunit">
    <text evidence="1">Forms a heterotetramer with UvrA during the search for lesions. Interacts with UvrC in an incision complex.</text>
</comment>
<comment type="subcellular location">
    <subcellularLocation>
        <location evidence="1">Cytoplasm</location>
    </subcellularLocation>
</comment>
<comment type="domain">
    <text evidence="1">The beta-hairpin motif is involved in DNA binding.</text>
</comment>
<comment type="similarity">
    <text evidence="1">Belongs to the UvrB family.</text>
</comment>
<feature type="chain" id="PRO_1000077865" description="UvrABC system protein B">
    <location>
        <begin position="1"/>
        <end position="693"/>
    </location>
</feature>
<feature type="domain" description="Helicase ATP-binding" evidence="1">
    <location>
        <begin position="35"/>
        <end position="188"/>
    </location>
</feature>
<feature type="domain" description="Helicase C-terminal" evidence="1">
    <location>
        <begin position="438"/>
        <end position="604"/>
    </location>
</feature>
<feature type="domain" description="UVR" evidence="1">
    <location>
        <begin position="648"/>
        <end position="683"/>
    </location>
</feature>
<feature type="short sequence motif" description="Beta-hairpin">
    <location>
        <begin position="101"/>
        <end position="124"/>
    </location>
</feature>
<feature type="binding site" evidence="1">
    <location>
        <begin position="48"/>
        <end position="55"/>
    </location>
    <ligand>
        <name>ATP</name>
        <dbReference type="ChEBI" id="CHEBI:30616"/>
    </ligand>
</feature>
<sequence>MSLAQEINRVVAPFEVISEFKPAGDQPAAIAELTERIKNGEKDVVLLGATGTGKSATTAWLIEQVQRPTLVMVQNKTLAAQLANEFRELLPNNAVEYFVSYYDYYQPEAYVAQTDTFIEKDSSVNEEVERLRHSATNALLTRRDVIVVATVSCIYGLGTPEEYIAGMVTLRKGAEMNRDDLLRKFVSMQYARNDMDFHRGTFRVRGDTVEIIPMYEELAIRIEFFGDEIENIHTLHPLTGEVIRDEEEMYVFPASHYVAGPERMSRAIKRIEDELAERLQVLESQNKLVEAQRLRMRTTYDLEMMQQMGFCNGIENYSSHIDGRARGTAPHCLLDYFPDDFLLVIDESHVTVPQIGAMYEGDMSRKRNLVDFGFRLPSAMDNRPLKWDEFQERVGQTVYLSATPGKYELGKSDGFVQQIIRPTGLIDPEVVVKPTKGQIDDLLGEIKTRTAKNERVLVTTLTKRMAEDLTDYLLGHGVKVEYLHSDVDTLRRVELLRELRMGVFDVLVGINLLREGLDLPEVSLVSILDADKEGFLRSSTSLIQTIGRAARNVSGQVHMYADRITDSMAHAIDETNRRRAIQVAYNTEHGIDPQPLRKKIADITDQLAKEDADTRELLAASGKTRGKGKGASTVRADGLAAAPAEDLVGLIEQLTEQMHAAAGELQFELAARLRDEVGELKKELRQMQAAGHA</sequence>